<comment type="function">
    <text evidence="3 5">Catalyzes the NADPH-dependent reduction of trans-2-enoyl thioesters in mitochondrial fatty acid synthesis (fatty acid synthesis type II). Fatty acid chain elongation in mitochondria uses acyl carrier protein (ACP) as an acyl group carrier, but the enzyme accepts both ACP and CoA thioesters as substrates in vitro (By similarity). Involved in iron homeostasis; affecting Fe-S cluster assembly and ceramide metabolism (PubMed:37653044). Required for proper morphology and bioenergetic functions of mitochondria (PubMed:37653044). Required for maintenance of neurons, including photoreceptor neurons (PubMed:37653044).</text>
</comment>
<comment type="catalytic activity">
    <reaction evidence="3">
        <text>a 2,3-saturated acyl-[ACP] + NADP(+) = a (2E)-enoyl-[ACP] + NADPH + H(+)</text>
        <dbReference type="Rhea" id="RHEA:22564"/>
        <dbReference type="Rhea" id="RHEA-COMP:9925"/>
        <dbReference type="Rhea" id="RHEA-COMP:9926"/>
        <dbReference type="ChEBI" id="CHEBI:15378"/>
        <dbReference type="ChEBI" id="CHEBI:57783"/>
        <dbReference type="ChEBI" id="CHEBI:58349"/>
        <dbReference type="ChEBI" id="CHEBI:78784"/>
        <dbReference type="ChEBI" id="CHEBI:78785"/>
        <dbReference type="EC" id="1.3.1.104"/>
    </reaction>
</comment>
<comment type="subunit">
    <text evidence="3">Homodimer.</text>
</comment>
<comment type="subcellular location">
    <subcellularLocation>
        <location evidence="5">Mitochondrion</location>
    </subcellularLocation>
</comment>
<comment type="tissue specificity">
    <text evidence="5">Expressed in the central nervous system.</text>
</comment>
<comment type="developmental stage">
    <text evidence="5">Expressed in the brain of third instar larvae with higher expression levels in glial cells compared to neurons (at protein level) (PubMed:37653044). Expressed in third instar larval salivary glands (PubMed:37653044).</text>
</comment>
<comment type="disruption phenotype">
    <text evidence="5">Larval lethal (PubMed:37653044). Larvae have increased iron levels, which accumulates in brain neuropils (PubMed:37653044). Larvae show increased levels of ceramides and some phospholipids due to dysregulated iron homeostasis (PubMed:37653044). Larval muscles have decreased mitochondrial membrane potential (PubMed:37653044). RNAi-mediated knockdown in neurons produces age-related climbing defects indicative of neurodegeneration (PubMed:37653044). Neurodegeneration phenotypes can be alleviated with drugs that reduce ceramide levels or by reducing dietary iron intake (PubMed:37653044).</text>
</comment>
<comment type="similarity">
    <text evidence="6">Belongs to the zinc-containing alcohol dehydrogenase family. Quinone oxidoreductase subfamily.</text>
</comment>
<gene>
    <name evidence="8" type="primary">Mecr</name>
    <name evidence="8" type="ORF">CG16935</name>
</gene>
<proteinExistence type="evidence at protein level"/>
<name>MECR_DROME</name>
<accession>Q9V6U9</accession>
<accession>H8F4T6</accession>
<sequence length="357" mass="39111">MLRRGFLSRINAAQWSRQMSVVAKSLKYTQHGEPQEVLQLVEDKLPDPKDNQVLVKILAAPINPADINTIQGKYPVKPKFPAVGGNECVAEVICVGDKVKGFEAGQHVIPLASGLGTWTTHAVYKEDQLLIVSKKVGLAEAATSTVNPTTAYRMLKDFVQLCPGDTVIQNGANSAVGQAVHQLCRAWGINSVGIVRDRPEIAELKQMLQCLGATEVLTEAEIRTSDIFKSGKLKKPRLAFNCVGGKSATEVSRHLDNGGVLVTYGGMSREPVTVATGPLIFKDIAFRGFWMTRWSKENYSSPERSKMFKEIFELMEQGKFVAPNHEMVPLAKFKDAAAAALSFKGFTGKKYILDMSI</sequence>
<feature type="transit peptide" description="Mitochondrion" evidence="4">
    <location>
        <begin position="1"/>
        <end position="19"/>
    </location>
</feature>
<feature type="chain" id="PRO_0000000894" description="Enoyl-[acyl-carrier-protein] reductase, mitochondrial">
    <location>
        <begin position="20"/>
        <end position="357"/>
    </location>
</feature>
<feature type="domain" description="Enoyl reductase (ER)" evidence="4">
    <location>
        <begin position="36"/>
        <end position="352"/>
    </location>
</feature>
<feature type="active site" description="Proton donor" evidence="2">
    <location>
        <position position="74"/>
    </location>
</feature>
<feature type="binding site" evidence="2">
    <location>
        <position position="147"/>
    </location>
    <ligand>
        <name>NADP(+)</name>
        <dbReference type="ChEBI" id="CHEBI:58349"/>
    </ligand>
</feature>
<feature type="binding site" evidence="2">
    <location>
        <begin position="173"/>
        <end position="176"/>
    </location>
    <ligand>
        <name>NADP(+)</name>
        <dbReference type="ChEBI" id="CHEBI:58349"/>
    </ligand>
</feature>
<feature type="binding site" evidence="2">
    <location>
        <begin position="196"/>
        <end position="198"/>
    </location>
    <ligand>
        <name>NADP(+)</name>
        <dbReference type="ChEBI" id="CHEBI:58349"/>
    </ligand>
</feature>
<feature type="binding site" evidence="2">
    <location>
        <begin position="264"/>
        <end position="267"/>
    </location>
    <ligand>
        <name>NADP(+)</name>
        <dbReference type="ChEBI" id="CHEBI:58349"/>
    </ligand>
</feature>
<feature type="binding site" evidence="2">
    <location>
        <begin position="289"/>
        <end position="291"/>
    </location>
    <ligand>
        <name>NADP(+)</name>
        <dbReference type="ChEBI" id="CHEBI:58349"/>
    </ligand>
</feature>
<feature type="binding site" evidence="1">
    <location>
        <position position="349"/>
    </location>
    <ligand>
        <name>NADP(+)</name>
        <dbReference type="ChEBI" id="CHEBI:58349"/>
    </ligand>
</feature>
<feature type="binding site" evidence="2">
    <location>
        <position position="350"/>
    </location>
    <ligand>
        <name>NADP(+)</name>
        <dbReference type="ChEBI" id="CHEBI:58349"/>
    </ligand>
</feature>
<evidence type="ECO:0000250" key="1"/>
<evidence type="ECO:0000250" key="2">
    <source>
        <dbReference type="UniProtKB" id="Q8WZM3"/>
    </source>
</evidence>
<evidence type="ECO:0000250" key="3">
    <source>
        <dbReference type="UniProtKB" id="Q9BV79"/>
    </source>
</evidence>
<evidence type="ECO:0000255" key="4"/>
<evidence type="ECO:0000269" key="5">
    <source>
    </source>
</evidence>
<evidence type="ECO:0000305" key="6"/>
<evidence type="ECO:0000312" key="7">
    <source>
        <dbReference type="EMBL" id="AFE85379.1"/>
    </source>
</evidence>
<evidence type="ECO:0000312" key="8">
    <source>
        <dbReference type="FlyBase" id="FBgn0033883"/>
    </source>
</evidence>
<evidence type="ECO:0000312" key="9">
    <source>
        <dbReference type="Proteomes" id="UP000000803"/>
    </source>
</evidence>
<dbReference type="EC" id="1.3.1.104" evidence="3"/>
<dbReference type="EMBL" id="AE013599">
    <property type="protein sequence ID" value="AAF58322.2"/>
    <property type="molecule type" value="Genomic_DNA"/>
</dbReference>
<dbReference type="EMBL" id="AE013599">
    <property type="protein sequence ID" value="AHN56194.1"/>
    <property type="molecule type" value="Genomic_DNA"/>
</dbReference>
<dbReference type="EMBL" id="BT133326">
    <property type="protein sequence ID" value="AFE85379.1"/>
    <property type="molecule type" value="mRNA"/>
</dbReference>
<dbReference type="RefSeq" id="NP_001286396.1">
    <property type="nucleotide sequence ID" value="NM_001299467.1"/>
</dbReference>
<dbReference type="RefSeq" id="NP_610914.2">
    <property type="nucleotide sequence ID" value="NM_137070.2"/>
</dbReference>
<dbReference type="SMR" id="Q9V6U9"/>
<dbReference type="BioGRID" id="62294">
    <property type="interactions" value="6"/>
</dbReference>
<dbReference type="FunCoup" id="Q9V6U9">
    <property type="interactions" value="2222"/>
</dbReference>
<dbReference type="IntAct" id="Q9V6U9">
    <property type="interactions" value="2"/>
</dbReference>
<dbReference type="STRING" id="7227.FBpp0086748"/>
<dbReference type="PaxDb" id="7227-FBpp0086748"/>
<dbReference type="EnsemblMetazoa" id="FBtr0087622">
    <property type="protein sequence ID" value="FBpp0086748"/>
    <property type="gene ID" value="FBgn0033883"/>
</dbReference>
<dbReference type="EnsemblMetazoa" id="FBtr0339954">
    <property type="protein sequence ID" value="FBpp0308976"/>
    <property type="gene ID" value="FBgn0033883"/>
</dbReference>
<dbReference type="GeneID" id="36540"/>
<dbReference type="KEGG" id="dme:Dmel_CG16935"/>
<dbReference type="UCSC" id="CG16935-RA">
    <property type="organism name" value="d. melanogaster"/>
</dbReference>
<dbReference type="AGR" id="FB:FBgn0033883"/>
<dbReference type="FlyBase" id="FBgn0033883">
    <property type="gene designation" value="Mecr"/>
</dbReference>
<dbReference type="VEuPathDB" id="VectorBase:FBgn0033883"/>
<dbReference type="eggNOG" id="KOG0025">
    <property type="taxonomic scope" value="Eukaryota"/>
</dbReference>
<dbReference type="GeneTree" id="ENSGT00940000156592"/>
<dbReference type="HOGENOM" id="CLU_026673_17_1_1"/>
<dbReference type="InParanoid" id="Q9V6U9"/>
<dbReference type="OMA" id="YGYTQSK"/>
<dbReference type="OrthoDB" id="7482721at2759"/>
<dbReference type="PhylomeDB" id="Q9V6U9"/>
<dbReference type="Reactome" id="R-DME-77346">
    <property type="pathway name" value="Beta oxidation of decanoyl-CoA to octanoyl-CoA-CoA"/>
</dbReference>
<dbReference type="BioGRID-ORCS" id="36540">
    <property type="hits" value="1 hit in 1 CRISPR screen"/>
</dbReference>
<dbReference type="GenomeRNAi" id="36540"/>
<dbReference type="PRO" id="PR:Q9V6U9"/>
<dbReference type="Proteomes" id="UP000000803">
    <property type="component" value="Chromosome 2R"/>
</dbReference>
<dbReference type="Bgee" id="FBgn0033883">
    <property type="expression patterns" value="Expressed in adult hindgut (Drosophila) and 132 other cell types or tissues"/>
</dbReference>
<dbReference type="ExpressionAtlas" id="Q9V6U9">
    <property type="expression patterns" value="baseline and differential"/>
</dbReference>
<dbReference type="GO" id="GO:0016020">
    <property type="term" value="C:membrane"/>
    <property type="evidence" value="ECO:0007669"/>
    <property type="project" value="GOC"/>
</dbReference>
<dbReference type="GO" id="GO:0005739">
    <property type="term" value="C:mitochondrion"/>
    <property type="evidence" value="ECO:0000314"/>
    <property type="project" value="FlyBase"/>
</dbReference>
<dbReference type="GO" id="GO:0141148">
    <property type="term" value="F:enoyl-[acyl-carrier-protein] reductase (NADPH) activity"/>
    <property type="evidence" value="ECO:0000250"/>
    <property type="project" value="UniProtKB"/>
</dbReference>
<dbReference type="GO" id="GO:0046513">
    <property type="term" value="P:ceramide biosynthetic process"/>
    <property type="evidence" value="ECO:0000315"/>
    <property type="project" value="UniProtKB"/>
</dbReference>
<dbReference type="GO" id="GO:0006633">
    <property type="term" value="P:fatty acid biosynthetic process"/>
    <property type="evidence" value="ECO:0007669"/>
    <property type="project" value="UniProtKB-KW"/>
</dbReference>
<dbReference type="GO" id="GO:0006631">
    <property type="term" value="P:fatty acid metabolic process"/>
    <property type="evidence" value="ECO:0000250"/>
    <property type="project" value="UniProtKB"/>
</dbReference>
<dbReference type="GO" id="GO:0006879">
    <property type="term" value="P:intracellular iron ion homeostasis"/>
    <property type="evidence" value="ECO:0000315"/>
    <property type="project" value="UniProtKB"/>
</dbReference>
<dbReference type="CDD" id="cd08290">
    <property type="entry name" value="ETR"/>
    <property type="match status" value="1"/>
</dbReference>
<dbReference type="FunFam" id="3.40.50.720:FF:000112">
    <property type="entry name" value="Enoyl-[acyl-carrier-protein] reductase 1, mitochondrial"/>
    <property type="match status" value="1"/>
</dbReference>
<dbReference type="FunFam" id="3.90.180.10:FF:000010">
    <property type="entry name" value="Enoyl-[acyl-carrier-protein] reductase, mitochondrial"/>
    <property type="match status" value="1"/>
</dbReference>
<dbReference type="Gene3D" id="3.90.180.10">
    <property type="entry name" value="Medium-chain alcohol dehydrogenases, catalytic domain"/>
    <property type="match status" value="1"/>
</dbReference>
<dbReference type="Gene3D" id="3.40.50.720">
    <property type="entry name" value="NAD(P)-binding Rossmann-like Domain"/>
    <property type="match status" value="1"/>
</dbReference>
<dbReference type="InterPro" id="IPR013149">
    <property type="entry name" value="ADH-like_C"/>
</dbReference>
<dbReference type="InterPro" id="IPR013154">
    <property type="entry name" value="ADH-like_N"/>
</dbReference>
<dbReference type="InterPro" id="IPR011032">
    <property type="entry name" value="GroES-like_sf"/>
</dbReference>
<dbReference type="InterPro" id="IPR051034">
    <property type="entry name" value="Mito_Enoyl-ACP_Reductase"/>
</dbReference>
<dbReference type="InterPro" id="IPR036291">
    <property type="entry name" value="NAD(P)-bd_dom_sf"/>
</dbReference>
<dbReference type="InterPro" id="IPR020843">
    <property type="entry name" value="PKS_ER"/>
</dbReference>
<dbReference type="PANTHER" id="PTHR43981">
    <property type="entry name" value="ENOYL-[ACYL-CARRIER-PROTEIN] REDUCTASE, MITOCHONDRIAL"/>
    <property type="match status" value="1"/>
</dbReference>
<dbReference type="PANTHER" id="PTHR43981:SF2">
    <property type="entry name" value="ENOYL-[ACYL-CARRIER-PROTEIN] REDUCTASE, MITOCHONDRIAL"/>
    <property type="match status" value="1"/>
</dbReference>
<dbReference type="Pfam" id="PF08240">
    <property type="entry name" value="ADH_N"/>
    <property type="match status" value="1"/>
</dbReference>
<dbReference type="Pfam" id="PF00107">
    <property type="entry name" value="ADH_zinc_N"/>
    <property type="match status" value="1"/>
</dbReference>
<dbReference type="SMART" id="SM00829">
    <property type="entry name" value="PKS_ER"/>
    <property type="match status" value="1"/>
</dbReference>
<dbReference type="SUPFAM" id="SSF50129">
    <property type="entry name" value="GroES-like"/>
    <property type="match status" value="1"/>
</dbReference>
<dbReference type="SUPFAM" id="SSF51735">
    <property type="entry name" value="NAD(P)-binding Rossmann-fold domains"/>
    <property type="match status" value="1"/>
</dbReference>
<keyword id="KW-0275">Fatty acid biosynthesis</keyword>
<keyword id="KW-0276">Fatty acid metabolism</keyword>
<keyword id="KW-0444">Lipid biosynthesis</keyword>
<keyword id="KW-0443">Lipid metabolism</keyword>
<keyword id="KW-0496">Mitochondrion</keyword>
<keyword id="KW-0521">NADP</keyword>
<keyword id="KW-0560">Oxidoreductase</keyword>
<keyword id="KW-1185">Reference proteome</keyword>
<keyword id="KW-0809">Transit peptide</keyword>
<organism evidence="9">
    <name type="scientific">Drosophila melanogaster</name>
    <name type="common">Fruit fly</name>
    <dbReference type="NCBI Taxonomy" id="7227"/>
    <lineage>
        <taxon>Eukaryota</taxon>
        <taxon>Metazoa</taxon>
        <taxon>Ecdysozoa</taxon>
        <taxon>Arthropoda</taxon>
        <taxon>Hexapoda</taxon>
        <taxon>Insecta</taxon>
        <taxon>Pterygota</taxon>
        <taxon>Neoptera</taxon>
        <taxon>Endopterygota</taxon>
        <taxon>Diptera</taxon>
        <taxon>Brachycera</taxon>
        <taxon>Muscomorpha</taxon>
        <taxon>Ephydroidea</taxon>
        <taxon>Drosophilidae</taxon>
        <taxon>Drosophila</taxon>
        <taxon>Sophophora</taxon>
    </lineage>
</organism>
<reference key="1">
    <citation type="journal article" date="2000" name="Science">
        <title>The genome sequence of Drosophila melanogaster.</title>
        <authorList>
            <person name="Adams M.D."/>
            <person name="Celniker S.E."/>
            <person name="Holt R.A."/>
            <person name="Evans C.A."/>
            <person name="Gocayne J.D."/>
            <person name="Amanatides P.G."/>
            <person name="Scherer S.E."/>
            <person name="Li P.W."/>
            <person name="Hoskins R.A."/>
            <person name="Galle R.F."/>
            <person name="George R.A."/>
            <person name="Lewis S.E."/>
            <person name="Richards S."/>
            <person name="Ashburner M."/>
            <person name="Henderson S.N."/>
            <person name="Sutton G.G."/>
            <person name="Wortman J.R."/>
            <person name="Yandell M.D."/>
            <person name="Zhang Q."/>
            <person name="Chen L.X."/>
            <person name="Brandon R.C."/>
            <person name="Rogers Y.-H.C."/>
            <person name="Blazej R.G."/>
            <person name="Champe M."/>
            <person name="Pfeiffer B.D."/>
            <person name="Wan K.H."/>
            <person name="Doyle C."/>
            <person name="Baxter E.G."/>
            <person name="Helt G."/>
            <person name="Nelson C.R."/>
            <person name="Miklos G.L.G."/>
            <person name="Abril J.F."/>
            <person name="Agbayani A."/>
            <person name="An H.-J."/>
            <person name="Andrews-Pfannkoch C."/>
            <person name="Baldwin D."/>
            <person name="Ballew R.M."/>
            <person name="Basu A."/>
            <person name="Baxendale J."/>
            <person name="Bayraktaroglu L."/>
            <person name="Beasley E.M."/>
            <person name="Beeson K.Y."/>
            <person name="Benos P.V."/>
            <person name="Berman B.P."/>
            <person name="Bhandari D."/>
            <person name="Bolshakov S."/>
            <person name="Borkova D."/>
            <person name="Botchan M.R."/>
            <person name="Bouck J."/>
            <person name="Brokstein P."/>
            <person name="Brottier P."/>
            <person name="Burtis K.C."/>
            <person name="Busam D.A."/>
            <person name="Butler H."/>
            <person name="Cadieu E."/>
            <person name="Center A."/>
            <person name="Chandra I."/>
            <person name="Cherry J.M."/>
            <person name="Cawley S."/>
            <person name="Dahlke C."/>
            <person name="Davenport L.B."/>
            <person name="Davies P."/>
            <person name="de Pablos B."/>
            <person name="Delcher A."/>
            <person name="Deng Z."/>
            <person name="Mays A.D."/>
            <person name="Dew I."/>
            <person name="Dietz S.M."/>
            <person name="Dodson K."/>
            <person name="Doup L.E."/>
            <person name="Downes M."/>
            <person name="Dugan-Rocha S."/>
            <person name="Dunkov B.C."/>
            <person name="Dunn P."/>
            <person name="Durbin K.J."/>
            <person name="Evangelista C.C."/>
            <person name="Ferraz C."/>
            <person name="Ferriera S."/>
            <person name="Fleischmann W."/>
            <person name="Fosler C."/>
            <person name="Gabrielian A.E."/>
            <person name="Garg N.S."/>
            <person name="Gelbart W.M."/>
            <person name="Glasser K."/>
            <person name="Glodek A."/>
            <person name="Gong F."/>
            <person name="Gorrell J.H."/>
            <person name="Gu Z."/>
            <person name="Guan P."/>
            <person name="Harris M."/>
            <person name="Harris N.L."/>
            <person name="Harvey D.A."/>
            <person name="Heiman T.J."/>
            <person name="Hernandez J.R."/>
            <person name="Houck J."/>
            <person name="Hostin D."/>
            <person name="Houston K.A."/>
            <person name="Howland T.J."/>
            <person name="Wei M.-H."/>
            <person name="Ibegwam C."/>
            <person name="Jalali M."/>
            <person name="Kalush F."/>
            <person name="Karpen G.H."/>
            <person name="Ke Z."/>
            <person name="Kennison J.A."/>
            <person name="Ketchum K.A."/>
            <person name="Kimmel B.E."/>
            <person name="Kodira C.D."/>
            <person name="Kraft C.L."/>
            <person name="Kravitz S."/>
            <person name="Kulp D."/>
            <person name="Lai Z."/>
            <person name="Lasko P."/>
            <person name="Lei Y."/>
            <person name="Levitsky A.A."/>
            <person name="Li J.H."/>
            <person name="Li Z."/>
            <person name="Liang Y."/>
            <person name="Lin X."/>
            <person name="Liu X."/>
            <person name="Mattei B."/>
            <person name="McIntosh T.C."/>
            <person name="McLeod M.P."/>
            <person name="McPherson D."/>
            <person name="Merkulov G."/>
            <person name="Milshina N.V."/>
            <person name="Mobarry C."/>
            <person name="Morris J."/>
            <person name="Moshrefi A."/>
            <person name="Mount S.M."/>
            <person name="Moy M."/>
            <person name="Murphy B."/>
            <person name="Murphy L."/>
            <person name="Muzny D.M."/>
            <person name="Nelson D.L."/>
            <person name="Nelson D.R."/>
            <person name="Nelson K.A."/>
            <person name="Nixon K."/>
            <person name="Nusskern D.R."/>
            <person name="Pacleb J.M."/>
            <person name="Palazzolo M."/>
            <person name="Pittman G.S."/>
            <person name="Pan S."/>
            <person name="Pollard J."/>
            <person name="Puri V."/>
            <person name="Reese M.G."/>
            <person name="Reinert K."/>
            <person name="Remington K."/>
            <person name="Saunders R.D.C."/>
            <person name="Scheeler F."/>
            <person name="Shen H."/>
            <person name="Shue B.C."/>
            <person name="Siden-Kiamos I."/>
            <person name="Simpson M."/>
            <person name="Skupski M.P."/>
            <person name="Smith T.J."/>
            <person name="Spier E."/>
            <person name="Spradling A.C."/>
            <person name="Stapleton M."/>
            <person name="Strong R."/>
            <person name="Sun E."/>
            <person name="Svirskas R."/>
            <person name="Tector C."/>
            <person name="Turner R."/>
            <person name="Venter E."/>
            <person name="Wang A.H."/>
            <person name="Wang X."/>
            <person name="Wang Z.-Y."/>
            <person name="Wassarman D.A."/>
            <person name="Weinstock G.M."/>
            <person name="Weissenbach J."/>
            <person name="Williams S.M."/>
            <person name="Woodage T."/>
            <person name="Worley K.C."/>
            <person name="Wu D."/>
            <person name="Yang S."/>
            <person name="Yao Q.A."/>
            <person name="Ye J."/>
            <person name="Yeh R.-F."/>
            <person name="Zaveri J.S."/>
            <person name="Zhan M."/>
            <person name="Zhang G."/>
            <person name="Zhao Q."/>
            <person name="Zheng L."/>
            <person name="Zheng X.H."/>
            <person name="Zhong F.N."/>
            <person name="Zhong W."/>
            <person name="Zhou X."/>
            <person name="Zhu S.C."/>
            <person name="Zhu X."/>
            <person name="Smith H.O."/>
            <person name="Gibbs R.A."/>
            <person name="Myers E.W."/>
            <person name="Rubin G.M."/>
            <person name="Venter J.C."/>
        </authorList>
    </citation>
    <scope>NUCLEOTIDE SEQUENCE [LARGE SCALE GENOMIC DNA]</scope>
    <source>
        <strain>Berkeley</strain>
    </source>
</reference>
<reference key="2">
    <citation type="journal article" date="2002" name="Genome Biol.">
        <title>Annotation of the Drosophila melanogaster euchromatic genome: a systematic review.</title>
        <authorList>
            <person name="Misra S."/>
            <person name="Crosby M.A."/>
            <person name="Mungall C.J."/>
            <person name="Matthews B.B."/>
            <person name="Campbell K.S."/>
            <person name="Hradecky P."/>
            <person name="Huang Y."/>
            <person name="Kaminker J.S."/>
            <person name="Millburn G.H."/>
            <person name="Prochnik S.E."/>
            <person name="Smith C.D."/>
            <person name="Tupy J.L."/>
            <person name="Whitfield E.J."/>
            <person name="Bayraktaroglu L."/>
            <person name="Berman B.P."/>
            <person name="Bettencourt B.R."/>
            <person name="Celniker S.E."/>
            <person name="de Grey A.D.N.J."/>
            <person name="Drysdale R.A."/>
            <person name="Harris N.L."/>
            <person name="Richter J."/>
            <person name="Russo S."/>
            <person name="Schroeder A.J."/>
            <person name="Shu S.Q."/>
            <person name="Stapleton M."/>
            <person name="Yamada C."/>
            <person name="Ashburner M."/>
            <person name="Gelbart W.M."/>
            <person name="Rubin G.M."/>
            <person name="Lewis S.E."/>
        </authorList>
    </citation>
    <scope>GENOME REANNOTATION</scope>
    <source>
        <strain>Berkeley</strain>
    </source>
</reference>
<reference evidence="7" key="3">
    <citation type="submission" date="2012-03" db="EMBL/GenBank/DDBJ databases">
        <authorList>
            <person name="Carlson J."/>
            <person name="Booth B."/>
            <person name="Frise E."/>
            <person name="Park S."/>
            <person name="Wan K."/>
            <person name="Yu C."/>
            <person name="Celniker S."/>
        </authorList>
    </citation>
    <scope>NUCLEOTIDE SEQUENCE [LARGE SCALE MRNA]</scope>
</reference>
<reference key="4">
    <citation type="journal article" date="2023" name="Nat. Metab.">
        <title>A defect in mitochondrial fatty acid synthesis impairs iron metabolism and causes elevated ceramide levels.</title>
        <authorList>
            <consortium name="Undiagnosed Diseases Network"/>
            <person name="Dutta D."/>
            <person name="Kanca O."/>
            <person name="Byeon S.K."/>
            <person name="Marcogliese P.C."/>
            <person name="Zuo Z."/>
            <person name="Shridharan R.V."/>
            <person name="Park J.H."/>
            <person name="Lin G."/>
            <person name="Ge M."/>
            <person name="Heimer G."/>
            <person name="Kohler J.N."/>
            <person name="Wheeler M.T."/>
            <person name="Kaipparettu B.A."/>
            <person name="Pandey A."/>
            <person name="Bellen H.J."/>
        </authorList>
    </citation>
    <scope>FUNCTION</scope>
    <scope>SUBCELLULAR LOCATION</scope>
    <scope>TISSUE SPECIFICITY</scope>
    <scope>DEVELOPMENTAL STAGE</scope>
    <scope>DISRUPTION PHENOTYPE</scope>
</reference>
<protein>
    <recommendedName>
        <fullName>Enoyl-[acyl-carrier-protein] reductase, mitochondrial</fullName>
        <ecNumber evidence="3">1.3.1.104</ecNumber>
    </recommendedName>
    <alternativeName>
        <fullName>2-enoyl thioester reductase</fullName>
    </alternativeName>
    <alternativeName>
        <fullName evidence="8">Mitochondrial trans-2-enoyl-CoA reductase</fullName>
    </alternativeName>
</protein>